<gene>
    <name type="primary">bcrC</name>
    <name type="synonym">ywoA</name>
    <name type="ordered locus">BSU36530</name>
</gene>
<feature type="chain" id="PRO_0000049990" description="Undecaprenyl-diphosphatase BcrC">
    <location>
        <begin position="1"/>
        <end position="193"/>
    </location>
</feature>
<feature type="transmembrane region" description="Helical" evidence="1">
    <location>
        <begin position="24"/>
        <end position="44"/>
    </location>
</feature>
<feature type="transmembrane region" description="Helical" evidence="1">
    <location>
        <begin position="53"/>
        <end position="73"/>
    </location>
</feature>
<feature type="transmembrane region" description="Helical" evidence="1">
    <location>
        <begin position="119"/>
        <end position="139"/>
    </location>
</feature>
<feature type="transmembrane region" description="Helical" evidence="1">
    <location>
        <begin position="140"/>
        <end position="160"/>
    </location>
</feature>
<reference key="1">
    <citation type="journal article" date="1997" name="Microbiology">
        <title>The Bacillus subtilis genome from gerBC (311 degrees) to licR (334 degrees).</title>
        <authorList>
            <person name="Presecan E."/>
            <person name="Moszer I."/>
            <person name="Boursier L."/>
            <person name="Cruz Ramos H."/>
            <person name="De La Fuente V."/>
            <person name="Hullo M.-F."/>
            <person name="Lelong C."/>
            <person name="Schleich S."/>
            <person name="Sekowska A."/>
            <person name="Song B.H."/>
            <person name="Villani G."/>
            <person name="Kunst F."/>
            <person name="Danchin A."/>
            <person name="Glaser P."/>
        </authorList>
    </citation>
    <scope>NUCLEOTIDE SEQUENCE [GENOMIC DNA]</scope>
    <source>
        <strain>168</strain>
    </source>
</reference>
<reference key="2">
    <citation type="journal article" date="1997" name="Nature">
        <title>The complete genome sequence of the Gram-positive bacterium Bacillus subtilis.</title>
        <authorList>
            <person name="Kunst F."/>
            <person name="Ogasawara N."/>
            <person name="Moszer I."/>
            <person name="Albertini A.M."/>
            <person name="Alloni G."/>
            <person name="Azevedo V."/>
            <person name="Bertero M.G."/>
            <person name="Bessieres P."/>
            <person name="Bolotin A."/>
            <person name="Borchert S."/>
            <person name="Borriss R."/>
            <person name="Boursier L."/>
            <person name="Brans A."/>
            <person name="Braun M."/>
            <person name="Brignell S.C."/>
            <person name="Bron S."/>
            <person name="Brouillet S."/>
            <person name="Bruschi C.V."/>
            <person name="Caldwell B."/>
            <person name="Capuano V."/>
            <person name="Carter N.M."/>
            <person name="Choi S.-K."/>
            <person name="Codani J.-J."/>
            <person name="Connerton I.F."/>
            <person name="Cummings N.J."/>
            <person name="Daniel R.A."/>
            <person name="Denizot F."/>
            <person name="Devine K.M."/>
            <person name="Duesterhoeft A."/>
            <person name="Ehrlich S.D."/>
            <person name="Emmerson P.T."/>
            <person name="Entian K.-D."/>
            <person name="Errington J."/>
            <person name="Fabret C."/>
            <person name="Ferrari E."/>
            <person name="Foulger D."/>
            <person name="Fritz C."/>
            <person name="Fujita M."/>
            <person name="Fujita Y."/>
            <person name="Fuma S."/>
            <person name="Galizzi A."/>
            <person name="Galleron N."/>
            <person name="Ghim S.-Y."/>
            <person name="Glaser P."/>
            <person name="Goffeau A."/>
            <person name="Golightly E.J."/>
            <person name="Grandi G."/>
            <person name="Guiseppi G."/>
            <person name="Guy B.J."/>
            <person name="Haga K."/>
            <person name="Haiech J."/>
            <person name="Harwood C.R."/>
            <person name="Henaut A."/>
            <person name="Hilbert H."/>
            <person name="Holsappel S."/>
            <person name="Hosono S."/>
            <person name="Hullo M.-F."/>
            <person name="Itaya M."/>
            <person name="Jones L.-M."/>
            <person name="Joris B."/>
            <person name="Karamata D."/>
            <person name="Kasahara Y."/>
            <person name="Klaerr-Blanchard M."/>
            <person name="Klein C."/>
            <person name="Kobayashi Y."/>
            <person name="Koetter P."/>
            <person name="Koningstein G."/>
            <person name="Krogh S."/>
            <person name="Kumano M."/>
            <person name="Kurita K."/>
            <person name="Lapidus A."/>
            <person name="Lardinois S."/>
            <person name="Lauber J."/>
            <person name="Lazarevic V."/>
            <person name="Lee S.-M."/>
            <person name="Levine A."/>
            <person name="Liu H."/>
            <person name="Masuda S."/>
            <person name="Mauel C."/>
            <person name="Medigue C."/>
            <person name="Medina N."/>
            <person name="Mellado R.P."/>
            <person name="Mizuno M."/>
            <person name="Moestl D."/>
            <person name="Nakai S."/>
            <person name="Noback M."/>
            <person name="Noone D."/>
            <person name="O'Reilly M."/>
            <person name="Ogawa K."/>
            <person name="Ogiwara A."/>
            <person name="Oudega B."/>
            <person name="Park S.-H."/>
            <person name="Parro V."/>
            <person name="Pohl T.M."/>
            <person name="Portetelle D."/>
            <person name="Porwollik S."/>
            <person name="Prescott A.M."/>
            <person name="Presecan E."/>
            <person name="Pujic P."/>
            <person name="Purnelle B."/>
            <person name="Rapoport G."/>
            <person name="Rey M."/>
            <person name="Reynolds S."/>
            <person name="Rieger M."/>
            <person name="Rivolta C."/>
            <person name="Rocha E."/>
            <person name="Roche B."/>
            <person name="Rose M."/>
            <person name="Sadaie Y."/>
            <person name="Sato T."/>
            <person name="Scanlan E."/>
            <person name="Schleich S."/>
            <person name="Schroeter R."/>
            <person name="Scoffone F."/>
            <person name="Sekiguchi J."/>
            <person name="Sekowska A."/>
            <person name="Seror S.J."/>
            <person name="Serror P."/>
            <person name="Shin B.-S."/>
            <person name="Soldo B."/>
            <person name="Sorokin A."/>
            <person name="Tacconi E."/>
            <person name="Takagi T."/>
            <person name="Takahashi H."/>
            <person name="Takemaru K."/>
            <person name="Takeuchi M."/>
            <person name="Tamakoshi A."/>
            <person name="Tanaka T."/>
            <person name="Terpstra P."/>
            <person name="Tognoni A."/>
            <person name="Tosato V."/>
            <person name="Uchiyama S."/>
            <person name="Vandenbol M."/>
            <person name="Vannier F."/>
            <person name="Vassarotti A."/>
            <person name="Viari A."/>
            <person name="Wambutt R."/>
            <person name="Wedler E."/>
            <person name="Wedler H."/>
            <person name="Weitzenegger T."/>
            <person name="Winters P."/>
            <person name="Wipat A."/>
            <person name="Yamamoto H."/>
            <person name="Yamane K."/>
            <person name="Yasumoto K."/>
            <person name="Yata K."/>
            <person name="Yoshida K."/>
            <person name="Yoshikawa H.-F."/>
            <person name="Zumstein E."/>
            <person name="Yoshikawa H."/>
            <person name="Danchin A."/>
        </authorList>
    </citation>
    <scope>NUCLEOTIDE SEQUENCE [LARGE SCALE GENOMIC DNA]</scope>
    <source>
        <strain>168</strain>
    </source>
</reference>
<reference key="3">
    <citation type="journal article" date="2002" name="J. Bacteriol.">
        <title>Regulation of the Bacillus subtilis bcrC bacitracin resistance gene by two extracytoplasmic function sigma factors.</title>
        <authorList>
            <person name="Cao M."/>
            <person name="Helmann J.D."/>
        </authorList>
    </citation>
    <scope>FUNCTION IN BACITRACIN RESISTANCE</scope>
    <scope>INDUCTION</scope>
    <source>
        <strain>168 / CU1065</strain>
    </source>
</reference>
<reference key="4">
    <citation type="journal article" date="2003" name="FEMS Microbiol. Lett.">
        <title>YtsCD and YwoA, two independent systems that confer bacitracin resistance to Bacillus subtilis.</title>
        <authorList>
            <person name="Bernard R."/>
            <person name="Joseph P."/>
            <person name="Guiseppi A."/>
            <person name="Chippaux M."/>
            <person name="Denizot F."/>
        </authorList>
    </citation>
    <scope>FUNCTION</scope>
    <source>
        <strain>168</strain>
    </source>
</reference>
<reference key="5">
    <citation type="journal article" date="2003" name="J. Bacteriol.">
        <title>A bacitracin-resistant Bacillus subtilis gene encodes a homologue of the membrane-spanning subunit of the Bacillus licheniformis ABC transporter.</title>
        <authorList>
            <person name="Ohki R."/>
            <person name="Tateno K."/>
            <person name="Okada Y."/>
            <person name="Okajima H."/>
            <person name="Asai K."/>
            <person name="Sadaie Y."/>
            <person name="Murata M."/>
            <person name="Aiso T."/>
        </authorList>
    </citation>
    <scope>INDUCTION</scope>
    <scope>DISRUPTION PHENOTYPE</scope>
    <source>
        <strain>168</strain>
    </source>
</reference>
<reference key="6">
    <citation type="journal article" date="2005" name="J. Biol. Chem.">
        <title>BcrC from Bacillus subtilis acts as an undecaprenyl pyrophosphate phosphatase in bacitracin resistance.</title>
        <authorList>
            <person name="Bernard R."/>
            <person name="El Ghachi M."/>
            <person name="Mengin-Lecreulx D."/>
            <person name="Chippaux M."/>
            <person name="Denizot F."/>
        </authorList>
    </citation>
    <scope>FUNCTION</scope>
    <scope>CATALYTIC ACTIVITY</scope>
    <scope>SUBCELLULAR LOCATION</scope>
    <source>
        <strain>168</strain>
    </source>
</reference>
<reference key="7">
    <citation type="journal article" date="2007" name="J. Bacteriol.">
        <title>SigM-responsive genes of Bacillus subtilis and their promoters.</title>
        <authorList>
            <person name="Jervis A.J."/>
            <person name="Thackray P.D."/>
            <person name="Houston C.W."/>
            <person name="Horsburgh M.J."/>
            <person name="Moir A."/>
        </authorList>
    </citation>
    <scope>INDUCTION</scope>
    <source>
        <strain>168 / 1604</strain>
    </source>
</reference>
<reference key="8">
    <citation type="journal article" date="2008" name="J. Bacteriol.">
        <title>Genetic evidence for the actin homolog gene mreBH and the bacitracin resistance gene bcrC as targets of the alternative sigma factor sigI of Bacillus subtilis.</title>
        <authorList>
            <person name="Tseng C.-L."/>
            <person name="Shaw G.-C."/>
        </authorList>
    </citation>
    <scope>INDUCTION</scope>
    <source>
        <strain>168</strain>
    </source>
</reference>
<protein>
    <recommendedName>
        <fullName>Undecaprenyl-diphosphatase BcrC</fullName>
        <ecNumber>3.6.1.27</ecNumber>
    </recommendedName>
    <alternativeName>
        <fullName>Undecaprenyl pyrophosphate phosphatase</fullName>
    </alternativeName>
</protein>
<name>BCRC_BACSU</name>
<proteinExistence type="evidence at protein level"/>
<dbReference type="EC" id="3.6.1.27"/>
<dbReference type="EMBL" id="Z82987">
    <property type="protein sequence ID" value="CAB05382.1"/>
    <property type="molecule type" value="Genomic_DNA"/>
</dbReference>
<dbReference type="EMBL" id="AL009126">
    <property type="protein sequence ID" value="CAB15670.1"/>
    <property type="molecule type" value="Genomic_DNA"/>
</dbReference>
<dbReference type="PIR" id="D70064">
    <property type="entry name" value="D70064"/>
</dbReference>
<dbReference type="RefSeq" id="NP_391534.1">
    <property type="nucleotide sequence ID" value="NC_000964.3"/>
</dbReference>
<dbReference type="RefSeq" id="WP_003243362.1">
    <property type="nucleotide sequence ID" value="NZ_OZ025638.1"/>
</dbReference>
<dbReference type="SMR" id="P94571"/>
<dbReference type="FunCoup" id="P94571">
    <property type="interactions" value="72"/>
</dbReference>
<dbReference type="STRING" id="224308.BSU36530"/>
<dbReference type="TCDB" id="9.B.105.1.3">
    <property type="family name" value="the lead resistance fusion protein (pbrbc) family"/>
</dbReference>
<dbReference type="PaxDb" id="224308-BSU36530"/>
<dbReference type="EnsemblBacteria" id="CAB15670">
    <property type="protein sequence ID" value="CAB15670"/>
    <property type="gene ID" value="BSU_36530"/>
</dbReference>
<dbReference type="GeneID" id="936946"/>
<dbReference type="KEGG" id="bsu:BSU36530"/>
<dbReference type="PATRIC" id="fig|224308.179.peg.3953"/>
<dbReference type="eggNOG" id="COG0671">
    <property type="taxonomic scope" value="Bacteria"/>
</dbReference>
<dbReference type="InParanoid" id="P94571"/>
<dbReference type="OrthoDB" id="9789113at2"/>
<dbReference type="PhylomeDB" id="P94571"/>
<dbReference type="BioCyc" id="BSUB:BSU36530-MONOMER"/>
<dbReference type="BRENDA" id="3.6.1.27">
    <property type="organism ID" value="658"/>
</dbReference>
<dbReference type="Proteomes" id="UP000001570">
    <property type="component" value="Chromosome"/>
</dbReference>
<dbReference type="GO" id="GO:0005886">
    <property type="term" value="C:plasma membrane"/>
    <property type="evidence" value="ECO:0007669"/>
    <property type="project" value="UniProtKB-SubCell"/>
</dbReference>
<dbReference type="GO" id="GO:0050380">
    <property type="term" value="F:undecaprenyl-diphosphatase activity"/>
    <property type="evidence" value="ECO:0007669"/>
    <property type="project" value="UniProtKB-EC"/>
</dbReference>
<dbReference type="GO" id="GO:0071555">
    <property type="term" value="P:cell wall organization"/>
    <property type="evidence" value="ECO:0007669"/>
    <property type="project" value="UniProtKB-KW"/>
</dbReference>
<dbReference type="GO" id="GO:0009252">
    <property type="term" value="P:peptidoglycan biosynthetic process"/>
    <property type="evidence" value="ECO:0007669"/>
    <property type="project" value="UniProtKB-KW"/>
</dbReference>
<dbReference type="GO" id="GO:0008360">
    <property type="term" value="P:regulation of cell shape"/>
    <property type="evidence" value="ECO:0007669"/>
    <property type="project" value="UniProtKB-KW"/>
</dbReference>
<dbReference type="GO" id="GO:0046677">
    <property type="term" value="P:response to antibiotic"/>
    <property type="evidence" value="ECO:0007669"/>
    <property type="project" value="UniProtKB-KW"/>
</dbReference>
<dbReference type="CDD" id="cd03385">
    <property type="entry name" value="PAP2_BcrC_like"/>
    <property type="match status" value="1"/>
</dbReference>
<dbReference type="Gene3D" id="1.20.144.10">
    <property type="entry name" value="Phosphatidic acid phosphatase type 2/haloperoxidase"/>
    <property type="match status" value="1"/>
</dbReference>
<dbReference type="InterPro" id="IPR036938">
    <property type="entry name" value="P_Acid_Pase_2/haloperoxi_sf"/>
</dbReference>
<dbReference type="InterPro" id="IPR000326">
    <property type="entry name" value="P_Acid_Pase_2/haloperoxidase"/>
</dbReference>
<dbReference type="InterPro" id="IPR033879">
    <property type="entry name" value="UPP_Pase"/>
</dbReference>
<dbReference type="PANTHER" id="PTHR14969">
    <property type="entry name" value="SPHINGOSINE-1-PHOSPHATE PHOSPHOHYDROLASE"/>
    <property type="match status" value="1"/>
</dbReference>
<dbReference type="PANTHER" id="PTHR14969:SF58">
    <property type="entry name" value="UNDECAPRENYL-DIPHOSPHATASE BCRC"/>
    <property type="match status" value="1"/>
</dbReference>
<dbReference type="Pfam" id="PF01569">
    <property type="entry name" value="PAP2"/>
    <property type="match status" value="1"/>
</dbReference>
<dbReference type="SMART" id="SM00014">
    <property type="entry name" value="acidPPc"/>
    <property type="match status" value="1"/>
</dbReference>
<dbReference type="SUPFAM" id="SSF48317">
    <property type="entry name" value="Acid phosphatase/Vanadium-dependent haloperoxidase"/>
    <property type="match status" value="1"/>
</dbReference>
<sequence>MNYEIFKAIHGLSHHNSVLDSIMVFITEYAIVAYALILLAIWLFGNTQSRKHVLYAGITGIAGLVINYLITLVYFEPRPFVAHTVHTLIPHAADASFPSDHTTGALAISIAMLFRNRKIGWPLVIFGLLTGFSRIWVGHHYPVDVLGSLVVAIIIGFLFFRFSDLLRPFVDLVVRIYEAIINKLTKKPTDQNF</sequence>
<comment type="function">
    <text evidence="2 4 5">Catalyzes the dephosphorylation of undecaprenyl diphosphate (UPP). Confers resistance to bacitracin.</text>
</comment>
<comment type="catalytic activity">
    <reaction evidence="5">
        <text>di-trans,octa-cis-undecaprenyl diphosphate + H2O = di-trans,octa-cis-undecaprenyl phosphate + phosphate + H(+)</text>
        <dbReference type="Rhea" id="RHEA:28094"/>
        <dbReference type="ChEBI" id="CHEBI:15377"/>
        <dbReference type="ChEBI" id="CHEBI:15378"/>
        <dbReference type="ChEBI" id="CHEBI:43474"/>
        <dbReference type="ChEBI" id="CHEBI:58405"/>
        <dbReference type="ChEBI" id="CHEBI:60392"/>
        <dbReference type="EC" id="3.6.1.27"/>
    </reaction>
</comment>
<comment type="subcellular location">
    <subcellularLocation>
        <location evidence="5">Cell membrane</location>
        <topology evidence="5">Multi-pass membrane protein</topology>
    </subcellularLocation>
</comment>
<comment type="induction">
    <text evidence="2 3 6 7">Expression is sigma M, sigma X and sigma I-dependent. Induced by vancomycin and bacitracin, via sigma M. Expression is maximal during early exponential phase and decreases during stationary phase.</text>
</comment>
<comment type="disruption phenotype">
    <text evidence="3">Disruption results in a marked decrease of resistance to bacitracin.</text>
</comment>
<comment type="miscellaneous">
    <text>Bacitracin is thought to be involved in the inhibition of peptidoglycan synthesis by sequestering undecaprenyl diphosphate, thereby reducing the pool of lipid carrier available.</text>
</comment>
<comment type="similarity">
    <text evidence="8">Belongs to the BcrC/YbjG family.</text>
</comment>
<organism>
    <name type="scientific">Bacillus subtilis (strain 168)</name>
    <dbReference type="NCBI Taxonomy" id="224308"/>
    <lineage>
        <taxon>Bacteria</taxon>
        <taxon>Bacillati</taxon>
        <taxon>Bacillota</taxon>
        <taxon>Bacilli</taxon>
        <taxon>Bacillales</taxon>
        <taxon>Bacillaceae</taxon>
        <taxon>Bacillus</taxon>
    </lineage>
</organism>
<keyword id="KW-0046">Antibiotic resistance</keyword>
<keyword id="KW-1003">Cell membrane</keyword>
<keyword id="KW-0133">Cell shape</keyword>
<keyword id="KW-0961">Cell wall biogenesis/degradation</keyword>
<keyword id="KW-0378">Hydrolase</keyword>
<keyword id="KW-0472">Membrane</keyword>
<keyword id="KW-0573">Peptidoglycan synthesis</keyword>
<keyword id="KW-1185">Reference proteome</keyword>
<keyword id="KW-0812">Transmembrane</keyword>
<keyword id="KW-1133">Transmembrane helix</keyword>
<accession>P94571</accession>
<evidence type="ECO:0000255" key="1"/>
<evidence type="ECO:0000269" key="2">
    <source>
    </source>
</evidence>
<evidence type="ECO:0000269" key="3">
    <source>
    </source>
</evidence>
<evidence type="ECO:0000269" key="4">
    <source>
    </source>
</evidence>
<evidence type="ECO:0000269" key="5">
    <source>
    </source>
</evidence>
<evidence type="ECO:0000269" key="6">
    <source>
    </source>
</evidence>
<evidence type="ECO:0000269" key="7">
    <source>
    </source>
</evidence>
<evidence type="ECO:0000305" key="8"/>